<proteinExistence type="inferred from homology"/>
<comment type="function">
    <text evidence="1">Catalyzes the formation of methylglyoxal from dihydroxyacetone phosphate.</text>
</comment>
<comment type="catalytic activity">
    <reaction evidence="1">
        <text>dihydroxyacetone phosphate = methylglyoxal + phosphate</text>
        <dbReference type="Rhea" id="RHEA:17937"/>
        <dbReference type="ChEBI" id="CHEBI:17158"/>
        <dbReference type="ChEBI" id="CHEBI:43474"/>
        <dbReference type="ChEBI" id="CHEBI:57642"/>
        <dbReference type="EC" id="4.2.3.3"/>
    </reaction>
</comment>
<comment type="similarity">
    <text evidence="1">Belongs to the methylglyoxal synthase family.</text>
</comment>
<evidence type="ECO:0000255" key="1">
    <source>
        <dbReference type="HAMAP-Rule" id="MF_00549"/>
    </source>
</evidence>
<dbReference type="EC" id="4.2.3.3" evidence="1"/>
<dbReference type="EMBL" id="AM180355">
    <property type="protein sequence ID" value="CAJ68006.1"/>
    <property type="molecule type" value="Genomic_DNA"/>
</dbReference>
<dbReference type="RefSeq" id="WP_003438060.1">
    <property type="nucleotide sequence ID" value="NZ_JAUPES010000006.1"/>
</dbReference>
<dbReference type="RefSeq" id="YP_001087645.1">
    <property type="nucleotide sequence ID" value="NC_009089.1"/>
</dbReference>
<dbReference type="SMR" id="Q18B16"/>
<dbReference type="STRING" id="272563.CD630_11530"/>
<dbReference type="EnsemblBacteria" id="CAJ68006">
    <property type="protein sequence ID" value="CAJ68006"/>
    <property type="gene ID" value="CD630_11530"/>
</dbReference>
<dbReference type="KEGG" id="cdf:CD630_11530"/>
<dbReference type="KEGG" id="pdc:CDIF630_01300"/>
<dbReference type="PATRIC" id="fig|272563.120.peg.1202"/>
<dbReference type="eggNOG" id="COG1803">
    <property type="taxonomic scope" value="Bacteria"/>
</dbReference>
<dbReference type="OrthoDB" id="9787147at2"/>
<dbReference type="PhylomeDB" id="Q18B16"/>
<dbReference type="BioCyc" id="PDIF272563:G12WB-1283-MONOMER"/>
<dbReference type="Proteomes" id="UP000001978">
    <property type="component" value="Chromosome"/>
</dbReference>
<dbReference type="GO" id="GO:0005829">
    <property type="term" value="C:cytosol"/>
    <property type="evidence" value="ECO:0007669"/>
    <property type="project" value="TreeGrafter"/>
</dbReference>
<dbReference type="GO" id="GO:0008929">
    <property type="term" value="F:methylglyoxal synthase activity"/>
    <property type="evidence" value="ECO:0007669"/>
    <property type="project" value="UniProtKB-UniRule"/>
</dbReference>
<dbReference type="GO" id="GO:0019242">
    <property type="term" value="P:methylglyoxal biosynthetic process"/>
    <property type="evidence" value="ECO:0007669"/>
    <property type="project" value="UniProtKB-UniRule"/>
</dbReference>
<dbReference type="CDD" id="cd01422">
    <property type="entry name" value="MGS"/>
    <property type="match status" value="1"/>
</dbReference>
<dbReference type="Gene3D" id="3.40.50.1380">
    <property type="entry name" value="Methylglyoxal synthase-like domain"/>
    <property type="match status" value="1"/>
</dbReference>
<dbReference type="HAMAP" id="MF_00549">
    <property type="entry name" value="Methylglyoxal_synth"/>
    <property type="match status" value="1"/>
</dbReference>
<dbReference type="InterPro" id="IPR004363">
    <property type="entry name" value="Methylgl_synth"/>
</dbReference>
<dbReference type="InterPro" id="IPR018148">
    <property type="entry name" value="Methylglyoxal_synth_AS"/>
</dbReference>
<dbReference type="InterPro" id="IPR011607">
    <property type="entry name" value="MGS-like_dom"/>
</dbReference>
<dbReference type="InterPro" id="IPR036914">
    <property type="entry name" value="MGS-like_dom_sf"/>
</dbReference>
<dbReference type="NCBIfam" id="TIGR00160">
    <property type="entry name" value="MGSA"/>
    <property type="match status" value="1"/>
</dbReference>
<dbReference type="NCBIfam" id="NF003559">
    <property type="entry name" value="PRK05234.1"/>
    <property type="match status" value="1"/>
</dbReference>
<dbReference type="PANTHER" id="PTHR30492">
    <property type="entry name" value="METHYLGLYOXAL SYNTHASE"/>
    <property type="match status" value="1"/>
</dbReference>
<dbReference type="PANTHER" id="PTHR30492:SF0">
    <property type="entry name" value="METHYLGLYOXAL SYNTHASE"/>
    <property type="match status" value="1"/>
</dbReference>
<dbReference type="Pfam" id="PF02142">
    <property type="entry name" value="MGS"/>
    <property type="match status" value="1"/>
</dbReference>
<dbReference type="PIRSF" id="PIRSF006614">
    <property type="entry name" value="Methylglyox_syn"/>
    <property type="match status" value="1"/>
</dbReference>
<dbReference type="SMART" id="SM00851">
    <property type="entry name" value="MGS"/>
    <property type="match status" value="1"/>
</dbReference>
<dbReference type="SUPFAM" id="SSF52335">
    <property type="entry name" value="Methylglyoxal synthase-like"/>
    <property type="match status" value="1"/>
</dbReference>
<dbReference type="PROSITE" id="PS01335">
    <property type="entry name" value="METHYLGLYOXAL_SYNTH"/>
    <property type="match status" value="1"/>
</dbReference>
<dbReference type="PROSITE" id="PS51855">
    <property type="entry name" value="MGS"/>
    <property type="match status" value="1"/>
</dbReference>
<accession>Q18B16</accession>
<sequence length="137" mass="15277">MNIALVAHDQMKNTMVGFCIGYESILKKYGLYATGTTGKRIMDETELNINRLASGPLGGDQQIGSLIVTQEIDLVIFLRDPLTSQAHETDIQALIRLCDVYHVPIATNLASAEIFIKALDRGELSWREVRKSKSQRI</sequence>
<name>MGSA_CLOD6</name>
<gene>
    <name evidence="1" type="primary">mgsA</name>
    <name type="ordered locus">CD630_11530</name>
</gene>
<protein>
    <recommendedName>
        <fullName evidence="1">Methylglyoxal synthase</fullName>
        <shortName evidence="1">MGS</shortName>
        <ecNumber evidence="1">4.2.3.3</ecNumber>
    </recommendedName>
</protein>
<feature type="chain" id="PRO_1000017803" description="Methylglyoxal synthase">
    <location>
        <begin position="1"/>
        <end position="137"/>
    </location>
</feature>
<feature type="domain" description="MGS-like" evidence="1">
    <location>
        <begin position="1"/>
        <end position="137"/>
    </location>
</feature>
<feature type="active site" description="Proton donor/acceptor" evidence="1">
    <location>
        <position position="60"/>
    </location>
</feature>
<feature type="binding site" evidence="1">
    <location>
        <position position="8"/>
    </location>
    <ligand>
        <name>substrate</name>
    </ligand>
</feature>
<feature type="binding site" evidence="1">
    <location>
        <position position="12"/>
    </location>
    <ligand>
        <name>substrate</name>
    </ligand>
</feature>
<feature type="binding site" evidence="1">
    <location>
        <begin position="34"/>
        <end position="37"/>
    </location>
    <ligand>
        <name>substrate</name>
    </ligand>
</feature>
<feature type="binding site" evidence="1">
    <location>
        <begin position="54"/>
        <end position="55"/>
    </location>
    <ligand>
        <name>substrate</name>
    </ligand>
</feature>
<feature type="binding site" evidence="1">
    <location>
        <position position="87"/>
    </location>
    <ligand>
        <name>substrate</name>
    </ligand>
</feature>
<organism>
    <name type="scientific">Clostridioides difficile (strain 630)</name>
    <name type="common">Peptoclostridium difficile</name>
    <dbReference type="NCBI Taxonomy" id="272563"/>
    <lineage>
        <taxon>Bacteria</taxon>
        <taxon>Bacillati</taxon>
        <taxon>Bacillota</taxon>
        <taxon>Clostridia</taxon>
        <taxon>Peptostreptococcales</taxon>
        <taxon>Peptostreptococcaceae</taxon>
        <taxon>Clostridioides</taxon>
    </lineage>
</organism>
<keyword id="KW-0456">Lyase</keyword>
<keyword id="KW-1185">Reference proteome</keyword>
<reference key="1">
    <citation type="journal article" date="2006" name="Nat. Genet.">
        <title>The multidrug-resistant human pathogen Clostridium difficile has a highly mobile, mosaic genome.</title>
        <authorList>
            <person name="Sebaihia M."/>
            <person name="Wren B.W."/>
            <person name="Mullany P."/>
            <person name="Fairweather N.F."/>
            <person name="Minton N."/>
            <person name="Stabler R."/>
            <person name="Thomson N.R."/>
            <person name="Roberts A.P."/>
            <person name="Cerdeno-Tarraga A.M."/>
            <person name="Wang H."/>
            <person name="Holden M.T.G."/>
            <person name="Wright A."/>
            <person name="Churcher C."/>
            <person name="Quail M.A."/>
            <person name="Baker S."/>
            <person name="Bason N."/>
            <person name="Brooks K."/>
            <person name="Chillingworth T."/>
            <person name="Cronin A."/>
            <person name="Davis P."/>
            <person name="Dowd L."/>
            <person name="Fraser A."/>
            <person name="Feltwell T."/>
            <person name="Hance Z."/>
            <person name="Holroyd S."/>
            <person name="Jagels K."/>
            <person name="Moule S."/>
            <person name="Mungall K."/>
            <person name="Price C."/>
            <person name="Rabbinowitsch E."/>
            <person name="Sharp S."/>
            <person name="Simmonds M."/>
            <person name="Stevens K."/>
            <person name="Unwin L."/>
            <person name="Whithead S."/>
            <person name="Dupuy B."/>
            <person name="Dougan G."/>
            <person name="Barrell B."/>
            <person name="Parkhill J."/>
        </authorList>
    </citation>
    <scope>NUCLEOTIDE SEQUENCE [LARGE SCALE GENOMIC DNA]</scope>
    <source>
        <strain>630</strain>
    </source>
</reference>